<feature type="chain" id="PRO_0000265067" description="Putative 3-methyladenine DNA glycosylase">
    <location>
        <begin position="1"/>
        <end position="194"/>
    </location>
</feature>
<comment type="similarity">
    <text evidence="1">Belongs to the DNA glycosylase MPG family.</text>
</comment>
<evidence type="ECO:0000255" key="1">
    <source>
        <dbReference type="HAMAP-Rule" id="MF_00527"/>
    </source>
</evidence>
<organism>
    <name type="scientific">Synechococcus elongatus (strain ATCC 33912 / PCC 7942 / FACHB-805)</name>
    <name type="common">Anacystis nidulans R2</name>
    <dbReference type="NCBI Taxonomy" id="1140"/>
    <lineage>
        <taxon>Bacteria</taxon>
        <taxon>Bacillati</taxon>
        <taxon>Cyanobacteriota</taxon>
        <taxon>Cyanophyceae</taxon>
        <taxon>Synechococcales</taxon>
        <taxon>Synechococcaceae</taxon>
        <taxon>Synechococcus</taxon>
    </lineage>
</organism>
<dbReference type="EC" id="3.2.2.-" evidence="1"/>
<dbReference type="EMBL" id="CP000100">
    <property type="protein sequence ID" value="ABB56701.1"/>
    <property type="molecule type" value="Genomic_DNA"/>
</dbReference>
<dbReference type="SMR" id="Q31QG8"/>
<dbReference type="STRING" id="1140.Synpcc7942_0669"/>
<dbReference type="PaxDb" id="1140-Synpcc7942_0669"/>
<dbReference type="KEGG" id="syf:Synpcc7942_0669"/>
<dbReference type="eggNOG" id="COG2094">
    <property type="taxonomic scope" value="Bacteria"/>
</dbReference>
<dbReference type="HOGENOM" id="CLU_060471_4_1_3"/>
<dbReference type="BioCyc" id="SYNEL:SYNPCC7942_0669-MONOMER"/>
<dbReference type="Proteomes" id="UP000889800">
    <property type="component" value="Chromosome"/>
</dbReference>
<dbReference type="GO" id="GO:0003905">
    <property type="term" value="F:alkylbase DNA N-glycosylase activity"/>
    <property type="evidence" value="ECO:0007669"/>
    <property type="project" value="InterPro"/>
</dbReference>
<dbReference type="GO" id="GO:0003677">
    <property type="term" value="F:DNA binding"/>
    <property type="evidence" value="ECO:0007669"/>
    <property type="project" value="InterPro"/>
</dbReference>
<dbReference type="GO" id="GO:0006284">
    <property type="term" value="P:base-excision repair"/>
    <property type="evidence" value="ECO:0007669"/>
    <property type="project" value="InterPro"/>
</dbReference>
<dbReference type="CDD" id="cd00540">
    <property type="entry name" value="AAG"/>
    <property type="match status" value="1"/>
</dbReference>
<dbReference type="Gene3D" id="3.10.300.10">
    <property type="entry name" value="Methylpurine-DNA glycosylase (MPG)"/>
    <property type="match status" value="2"/>
</dbReference>
<dbReference type="HAMAP" id="MF_00527">
    <property type="entry name" value="3MGH"/>
    <property type="match status" value="1"/>
</dbReference>
<dbReference type="InterPro" id="IPR011034">
    <property type="entry name" value="Formyl_transferase-like_C_sf"/>
</dbReference>
<dbReference type="InterPro" id="IPR003180">
    <property type="entry name" value="MPG"/>
</dbReference>
<dbReference type="InterPro" id="IPR036995">
    <property type="entry name" value="MPG_sf"/>
</dbReference>
<dbReference type="NCBIfam" id="TIGR00567">
    <property type="entry name" value="3mg"/>
    <property type="match status" value="1"/>
</dbReference>
<dbReference type="PANTHER" id="PTHR10429">
    <property type="entry name" value="DNA-3-METHYLADENINE GLYCOSYLASE"/>
    <property type="match status" value="1"/>
</dbReference>
<dbReference type="PANTHER" id="PTHR10429:SF0">
    <property type="entry name" value="DNA-3-METHYLADENINE GLYCOSYLASE"/>
    <property type="match status" value="1"/>
</dbReference>
<dbReference type="Pfam" id="PF02245">
    <property type="entry name" value="Pur_DNA_glyco"/>
    <property type="match status" value="1"/>
</dbReference>
<dbReference type="SUPFAM" id="SSF50486">
    <property type="entry name" value="FMT C-terminal domain-like"/>
    <property type="match status" value="1"/>
</dbReference>
<reference key="1">
    <citation type="submission" date="2005-08" db="EMBL/GenBank/DDBJ databases">
        <title>Complete sequence of chromosome 1 of Synechococcus elongatus PCC 7942.</title>
        <authorList>
            <consortium name="US DOE Joint Genome Institute"/>
            <person name="Copeland A."/>
            <person name="Lucas S."/>
            <person name="Lapidus A."/>
            <person name="Barry K."/>
            <person name="Detter J.C."/>
            <person name="Glavina T."/>
            <person name="Hammon N."/>
            <person name="Israni S."/>
            <person name="Pitluck S."/>
            <person name="Schmutz J."/>
            <person name="Larimer F."/>
            <person name="Land M."/>
            <person name="Kyrpides N."/>
            <person name="Lykidis A."/>
            <person name="Golden S."/>
            <person name="Richardson P."/>
        </authorList>
    </citation>
    <scope>NUCLEOTIDE SEQUENCE [LARGE SCALE GENOMIC DNA]</scope>
    <source>
        <strain>ATCC 33912 / PCC 7942 / FACHB-805</strain>
    </source>
</reference>
<sequence>MLESPWHPLLSQPATEAAIALLGCWLVRRFADGRVIRGRIVETEAYEAGDPACHGYRRQTARNRSMFGPPGQVYVYQIYGRYHCINLATEAADLASAVLIRALEFPDTEAIAGAGPGRLCRFLAIDRQLDGSWLGPTSPLDLEAADYPLGTLIQTTRIGLTRGVDLPWRWYLAESPAVSRRDRRAEAEQMGVSV</sequence>
<accession>Q31QG8</accession>
<gene>
    <name type="ordered locus">Synpcc7942_0669</name>
</gene>
<protein>
    <recommendedName>
        <fullName evidence="1">Putative 3-methyladenine DNA glycosylase</fullName>
        <ecNumber evidence="1">3.2.2.-</ecNumber>
    </recommendedName>
</protein>
<keyword id="KW-0227">DNA damage</keyword>
<keyword id="KW-0234">DNA repair</keyword>
<keyword id="KW-0378">Hydrolase</keyword>
<keyword id="KW-1185">Reference proteome</keyword>
<proteinExistence type="inferred from homology"/>
<name>3MGH_SYNE7</name>